<reference key="1">
    <citation type="submission" date="2006-03" db="EMBL/GenBank/DDBJ databases">
        <title>Complete sequence of Methylobacillus flagellatus KT.</title>
        <authorList>
            <consortium name="US DOE Joint Genome Institute"/>
            <person name="Copeland A."/>
            <person name="Lucas S."/>
            <person name="Lapidus A."/>
            <person name="Barry K."/>
            <person name="Detter J.C."/>
            <person name="Glavina del Rio T."/>
            <person name="Hammon N."/>
            <person name="Israni S."/>
            <person name="Dalin E."/>
            <person name="Tice H."/>
            <person name="Pitluck S."/>
            <person name="Brettin T."/>
            <person name="Bruce D."/>
            <person name="Han C."/>
            <person name="Tapia R."/>
            <person name="Saunders E."/>
            <person name="Gilna P."/>
            <person name="Schmutz J."/>
            <person name="Larimer F."/>
            <person name="Land M."/>
            <person name="Kyrpides N."/>
            <person name="Anderson I."/>
            <person name="Richardson P."/>
        </authorList>
    </citation>
    <scope>NUCLEOTIDE SEQUENCE [LARGE SCALE GENOMIC DNA]</scope>
    <source>
        <strain>ATCC 51484 / DSM 6875 / VKM B-1610 / KT</strain>
    </source>
</reference>
<comment type="function">
    <text evidence="1">Displays ATPase and GTPase activities.</text>
</comment>
<comment type="similarity">
    <text evidence="1">Belongs to the RapZ-like family.</text>
</comment>
<keyword id="KW-0067">ATP-binding</keyword>
<keyword id="KW-0342">GTP-binding</keyword>
<keyword id="KW-0547">Nucleotide-binding</keyword>
<keyword id="KW-1185">Reference proteome</keyword>
<organism>
    <name type="scientific">Methylobacillus flagellatus (strain ATCC 51484 / DSM 6875 / VKM B-1610 / KT)</name>
    <dbReference type="NCBI Taxonomy" id="265072"/>
    <lineage>
        <taxon>Bacteria</taxon>
        <taxon>Pseudomonadati</taxon>
        <taxon>Pseudomonadota</taxon>
        <taxon>Betaproteobacteria</taxon>
        <taxon>Nitrosomonadales</taxon>
        <taxon>Methylophilaceae</taxon>
        <taxon>Methylobacillus</taxon>
    </lineage>
</organism>
<feature type="chain" id="PRO_0000258972" description="Nucleotide-binding protein Mfla_0145">
    <location>
        <begin position="1"/>
        <end position="280"/>
    </location>
</feature>
<feature type="binding site" evidence="1">
    <location>
        <begin position="8"/>
        <end position="15"/>
    </location>
    <ligand>
        <name>ATP</name>
        <dbReference type="ChEBI" id="CHEBI:30616"/>
    </ligand>
</feature>
<feature type="binding site" evidence="1">
    <location>
        <begin position="57"/>
        <end position="60"/>
    </location>
    <ligand>
        <name>GTP</name>
        <dbReference type="ChEBI" id="CHEBI:37565"/>
    </ligand>
</feature>
<protein>
    <recommendedName>
        <fullName evidence="1">Nucleotide-binding protein Mfla_0145</fullName>
    </recommendedName>
</protein>
<gene>
    <name type="ordered locus">Mfla_0145</name>
</gene>
<name>Y145_METFK</name>
<evidence type="ECO:0000255" key="1">
    <source>
        <dbReference type="HAMAP-Rule" id="MF_00636"/>
    </source>
</evidence>
<dbReference type="EMBL" id="CP000284">
    <property type="protein sequence ID" value="ABE48416.1"/>
    <property type="molecule type" value="Genomic_DNA"/>
</dbReference>
<dbReference type="RefSeq" id="WP_011478513.1">
    <property type="nucleotide sequence ID" value="NC_007947.1"/>
</dbReference>
<dbReference type="SMR" id="Q1H521"/>
<dbReference type="STRING" id="265072.Mfla_0145"/>
<dbReference type="KEGG" id="mfa:Mfla_0145"/>
<dbReference type="eggNOG" id="COG1660">
    <property type="taxonomic scope" value="Bacteria"/>
</dbReference>
<dbReference type="HOGENOM" id="CLU_059558_1_1_4"/>
<dbReference type="OrthoDB" id="9784461at2"/>
<dbReference type="Proteomes" id="UP000002440">
    <property type="component" value="Chromosome"/>
</dbReference>
<dbReference type="GO" id="GO:0005524">
    <property type="term" value="F:ATP binding"/>
    <property type="evidence" value="ECO:0007669"/>
    <property type="project" value="UniProtKB-UniRule"/>
</dbReference>
<dbReference type="GO" id="GO:0005525">
    <property type="term" value="F:GTP binding"/>
    <property type="evidence" value="ECO:0007669"/>
    <property type="project" value="UniProtKB-UniRule"/>
</dbReference>
<dbReference type="CDD" id="cd00267">
    <property type="entry name" value="ABC_ATPase"/>
    <property type="match status" value="1"/>
</dbReference>
<dbReference type="Gene3D" id="3.40.50.300">
    <property type="entry name" value="P-loop containing nucleotide triphosphate hydrolases"/>
    <property type="match status" value="1"/>
</dbReference>
<dbReference type="HAMAP" id="MF_00636">
    <property type="entry name" value="RapZ_like"/>
    <property type="match status" value="1"/>
</dbReference>
<dbReference type="InterPro" id="IPR027417">
    <property type="entry name" value="P-loop_NTPase"/>
</dbReference>
<dbReference type="InterPro" id="IPR005337">
    <property type="entry name" value="RapZ-like"/>
</dbReference>
<dbReference type="InterPro" id="IPR053930">
    <property type="entry name" value="RapZ-like_N"/>
</dbReference>
<dbReference type="InterPro" id="IPR053931">
    <property type="entry name" value="RapZ_C"/>
</dbReference>
<dbReference type="NCBIfam" id="NF003828">
    <property type="entry name" value="PRK05416.1"/>
    <property type="match status" value="1"/>
</dbReference>
<dbReference type="PANTHER" id="PTHR30448">
    <property type="entry name" value="RNASE ADAPTER PROTEIN RAPZ"/>
    <property type="match status" value="1"/>
</dbReference>
<dbReference type="PANTHER" id="PTHR30448:SF0">
    <property type="entry name" value="RNASE ADAPTER PROTEIN RAPZ"/>
    <property type="match status" value="1"/>
</dbReference>
<dbReference type="Pfam" id="PF22740">
    <property type="entry name" value="PapZ_C"/>
    <property type="match status" value="1"/>
</dbReference>
<dbReference type="Pfam" id="PF03668">
    <property type="entry name" value="RapZ-like_N"/>
    <property type="match status" value="1"/>
</dbReference>
<dbReference type="PIRSF" id="PIRSF005052">
    <property type="entry name" value="P-loopkin"/>
    <property type="match status" value="1"/>
</dbReference>
<dbReference type="SUPFAM" id="SSF52540">
    <property type="entry name" value="P-loop containing nucleoside triphosphate hydrolases"/>
    <property type="match status" value="1"/>
</dbReference>
<sequence>MQLVIVTGLSGSGKSIVLKMLEDSGYYCIDNLPATLLPQASEHLSQGNHQRVAISIDTRSASLEALPGNIRKLKDEGIEVQVLFLEANVETLVKRYSETRRRHPLSSDTSTLAESISHERHMLEPLVDLGLRIDTSSLSANALRNWVKEFVTQKNGELILLFSSFGFKHGIPLDADYVFDVRCLPNPYYDPALRPQTGQDKPVCAFLEAHDSVQNMYDDIRGFIERWLPNFIADNRSYLTVAIGCTGGQHRSVYLAERLAAHFRRQEYRVLVRHRSLETN</sequence>
<proteinExistence type="inferred from homology"/>
<accession>Q1H521</accession>